<name>PPID_ASPFU</name>
<organism>
    <name type="scientific">Aspergillus fumigatus (strain ATCC MYA-4609 / CBS 101355 / FGSC A1100 / Af293)</name>
    <name type="common">Neosartorya fumigata</name>
    <dbReference type="NCBI Taxonomy" id="330879"/>
    <lineage>
        <taxon>Eukaryota</taxon>
        <taxon>Fungi</taxon>
        <taxon>Dikarya</taxon>
        <taxon>Ascomycota</taxon>
        <taxon>Pezizomycotina</taxon>
        <taxon>Eurotiomycetes</taxon>
        <taxon>Eurotiomycetidae</taxon>
        <taxon>Eurotiales</taxon>
        <taxon>Aspergillaceae</taxon>
        <taxon>Aspergillus</taxon>
        <taxon>Aspergillus subgen. Fumigati</taxon>
    </lineage>
</organism>
<evidence type="ECO:0000250" key="1"/>
<evidence type="ECO:0000255" key="2">
    <source>
        <dbReference type="PROSITE-ProRule" id="PRU00156"/>
    </source>
</evidence>
<evidence type="ECO:0000305" key="3"/>
<keyword id="KW-0963">Cytoplasm</keyword>
<keyword id="KW-0413">Isomerase</keyword>
<keyword id="KW-1185">Reference proteome</keyword>
<keyword id="KW-0677">Repeat</keyword>
<keyword id="KW-0697">Rotamase</keyword>
<keyword id="KW-0802">TPR repeat</keyword>
<reference key="1">
    <citation type="journal article" date="2005" name="Nature">
        <title>Genomic sequence of the pathogenic and allergenic filamentous fungus Aspergillus fumigatus.</title>
        <authorList>
            <person name="Nierman W.C."/>
            <person name="Pain A."/>
            <person name="Anderson M.J."/>
            <person name="Wortman J.R."/>
            <person name="Kim H.S."/>
            <person name="Arroyo J."/>
            <person name="Berriman M."/>
            <person name="Abe K."/>
            <person name="Archer D.B."/>
            <person name="Bermejo C."/>
            <person name="Bennett J.W."/>
            <person name="Bowyer P."/>
            <person name="Chen D."/>
            <person name="Collins M."/>
            <person name="Coulsen R."/>
            <person name="Davies R."/>
            <person name="Dyer P.S."/>
            <person name="Farman M.L."/>
            <person name="Fedorova N."/>
            <person name="Fedorova N.D."/>
            <person name="Feldblyum T.V."/>
            <person name="Fischer R."/>
            <person name="Fosker N."/>
            <person name="Fraser A."/>
            <person name="Garcia J.L."/>
            <person name="Garcia M.J."/>
            <person name="Goble A."/>
            <person name="Goldman G.H."/>
            <person name="Gomi K."/>
            <person name="Griffith-Jones S."/>
            <person name="Gwilliam R."/>
            <person name="Haas B.J."/>
            <person name="Haas H."/>
            <person name="Harris D.E."/>
            <person name="Horiuchi H."/>
            <person name="Huang J."/>
            <person name="Humphray S."/>
            <person name="Jimenez J."/>
            <person name="Keller N."/>
            <person name="Khouri H."/>
            <person name="Kitamoto K."/>
            <person name="Kobayashi T."/>
            <person name="Konzack S."/>
            <person name="Kulkarni R."/>
            <person name="Kumagai T."/>
            <person name="Lafton A."/>
            <person name="Latge J.-P."/>
            <person name="Li W."/>
            <person name="Lord A."/>
            <person name="Lu C."/>
            <person name="Majoros W.H."/>
            <person name="May G.S."/>
            <person name="Miller B.L."/>
            <person name="Mohamoud Y."/>
            <person name="Molina M."/>
            <person name="Monod M."/>
            <person name="Mouyna I."/>
            <person name="Mulligan S."/>
            <person name="Murphy L.D."/>
            <person name="O'Neil S."/>
            <person name="Paulsen I."/>
            <person name="Penalva M.A."/>
            <person name="Pertea M."/>
            <person name="Price C."/>
            <person name="Pritchard B.L."/>
            <person name="Quail M.A."/>
            <person name="Rabbinowitsch E."/>
            <person name="Rawlins N."/>
            <person name="Rajandream M.A."/>
            <person name="Reichard U."/>
            <person name="Renauld H."/>
            <person name="Robson G.D."/>
            <person name="Rodriguez de Cordoba S."/>
            <person name="Rodriguez-Pena J.M."/>
            <person name="Ronning C.M."/>
            <person name="Rutter S."/>
            <person name="Salzberg S.L."/>
            <person name="Sanchez M."/>
            <person name="Sanchez-Ferrero J.C."/>
            <person name="Saunders D."/>
            <person name="Seeger K."/>
            <person name="Squares R."/>
            <person name="Squares S."/>
            <person name="Takeuchi M."/>
            <person name="Tekaia F."/>
            <person name="Turner G."/>
            <person name="Vazquez de Aldana C.R."/>
            <person name="Weidman J."/>
            <person name="White O."/>
            <person name="Woodward J.R."/>
            <person name="Yu J.-H."/>
            <person name="Fraser C.M."/>
            <person name="Galagan J.E."/>
            <person name="Asai K."/>
            <person name="Machida M."/>
            <person name="Hall N."/>
            <person name="Barrell B.G."/>
            <person name="Denning D.W."/>
        </authorList>
    </citation>
    <scope>NUCLEOTIDE SEQUENCE [LARGE SCALE GENOMIC DNA]</scope>
    <source>
        <strain>ATCC MYA-4609 / CBS 101355 / FGSC A1100 / Af293</strain>
    </source>
</reference>
<sequence length="377" mass="41808">MAETQRRPRVYFDIQIGSQKAGRIALELVRLPFNDVVPKTAENFRALCTGEKGVGKQRKPLSYKGSIFHRVIKQFMIQGGDFTNFNGTGGESIYGEKFPDENFELKHDRPFLLSMANSGPGTNGSQFFITTVPTPHLDGKHVVFGEVINGKSIVRKIENMPTQADKPTTDVTIVDCGELSGEDYENATKQVADATGDPYEDYPDDHQGEELNAQVCFKIASELKNFGNTAFKSGDVALGLDKYQKGLRYLNEFPDPDENDPKDLEPQMKSLRFTLHSNSSLLANKLGQYKNAQNWATYALEVADAANAKEADRAKAYYRRAVAYSGQKEEDEALKDLQEALKLAPGDAGILNEIAKVKKAIKDSEAKEKAAARKFFS</sequence>
<feature type="chain" id="PRO_0000232942" description="Peptidyl-prolyl cis-trans isomerase D">
    <location>
        <begin position="1"/>
        <end position="377"/>
    </location>
</feature>
<feature type="domain" description="PPIase cyclophilin-type" evidence="2">
    <location>
        <begin position="11"/>
        <end position="178"/>
    </location>
</feature>
<feature type="repeat" description="TPR 1">
    <location>
        <begin position="220"/>
        <end position="253"/>
    </location>
</feature>
<feature type="repeat" description="TPR 2">
    <location>
        <begin position="273"/>
        <end position="306"/>
    </location>
</feature>
<feature type="repeat" description="TPR 3">
    <location>
        <begin position="314"/>
        <end position="347"/>
    </location>
</feature>
<proteinExistence type="inferred from homology"/>
<dbReference type="EC" id="5.2.1.8"/>
<dbReference type="EMBL" id="AAHF01000008">
    <property type="protein sequence ID" value="EAL87302.1"/>
    <property type="molecule type" value="Genomic_DNA"/>
</dbReference>
<dbReference type="RefSeq" id="XP_749340.1">
    <property type="nucleotide sequence ID" value="XM_744247.1"/>
</dbReference>
<dbReference type="SMR" id="Q4WIF3"/>
<dbReference type="FunCoup" id="Q4WIF3">
    <property type="interactions" value="1087"/>
</dbReference>
<dbReference type="STRING" id="330879.Q4WIF3"/>
<dbReference type="EnsemblFungi" id="EAL87302">
    <property type="protein sequence ID" value="EAL87302"/>
    <property type="gene ID" value="AFUA_2G02050"/>
</dbReference>
<dbReference type="GeneID" id="3507112"/>
<dbReference type="KEGG" id="afm:AFUA_2G02050"/>
<dbReference type="eggNOG" id="KOG0546">
    <property type="taxonomic scope" value="Eukaryota"/>
</dbReference>
<dbReference type="HOGENOM" id="CLU_012062_37_0_1"/>
<dbReference type="InParanoid" id="Q4WIF3"/>
<dbReference type="OMA" id="EMEQNCN"/>
<dbReference type="OrthoDB" id="193499at2759"/>
<dbReference type="Proteomes" id="UP000002530">
    <property type="component" value="Chromosome 2"/>
</dbReference>
<dbReference type="GO" id="GO:0005737">
    <property type="term" value="C:cytoplasm"/>
    <property type="evidence" value="ECO:0000318"/>
    <property type="project" value="GO_Central"/>
</dbReference>
<dbReference type="GO" id="GO:0043231">
    <property type="term" value="C:intracellular membrane-bounded organelle"/>
    <property type="evidence" value="ECO:0000318"/>
    <property type="project" value="GO_Central"/>
</dbReference>
<dbReference type="GO" id="GO:0016018">
    <property type="term" value="F:cyclosporin A binding"/>
    <property type="evidence" value="ECO:0000318"/>
    <property type="project" value="GO_Central"/>
</dbReference>
<dbReference type="GO" id="GO:0003755">
    <property type="term" value="F:peptidyl-prolyl cis-trans isomerase activity"/>
    <property type="evidence" value="ECO:0000318"/>
    <property type="project" value="GO_Central"/>
</dbReference>
<dbReference type="GO" id="GO:0043022">
    <property type="term" value="F:ribosome binding"/>
    <property type="evidence" value="ECO:0007669"/>
    <property type="project" value="EnsemblFungi"/>
</dbReference>
<dbReference type="GO" id="GO:0051082">
    <property type="term" value="F:unfolded protein binding"/>
    <property type="evidence" value="ECO:0007669"/>
    <property type="project" value="EnsemblFungi"/>
</dbReference>
<dbReference type="GO" id="GO:0006457">
    <property type="term" value="P:protein folding"/>
    <property type="evidence" value="ECO:0000318"/>
    <property type="project" value="GO_Central"/>
</dbReference>
<dbReference type="GO" id="GO:0042026">
    <property type="term" value="P:protein refolding"/>
    <property type="evidence" value="ECO:0007669"/>
    <property type="project" value="EnsemblFungi"/>
</dbReference>
<dbReference type="CDD" id="cd01926">
    <property type="entry name" value="cyclophilin_ABH_like"/>
    <property type="match status" value="1"/>
</dbReference>
<dbReference type="FunFam" id="2.40.100.10:FF:000009">
    <property type="entry name" value="Peptidyl-prolyl cis-trans isomerase D"/>
    <property type="match status" value="1"/>
</dbReference>
<dbReference type="FunFam" id="1.25.40.10:FF:000029">
    <property type="entry name" value="peptidyl-prolyl cis-trans isomerase D"/>
    <property type="match status" value="1"/>
</dbReference>
<dbReference type="Gene3D" id="2.40.100.10">
    <property type="entry name" value="Cyclophilin-like"/>
    <property type="match status" value="1"/>
</dbReference>
<dbReference type="Gene3D" id="1.25.40.10">
    <property type="entry name" value="Tetratricopeptide repeat domain"/>
    <property type="match status" value="1"/>
</dbReference>
<dbReference type="InterPro" id="IPR029000">
    <property type="entry name" value="Cyclophilin-like_dom_sf"/>
</dbReference>
<dbReference type="InterPro" id="IPR020892">
    <property type="entry name" value="Cyclophilin-type_PPIase_CS"/>
</dbReference>
<dbReference type="InterPro" id="IPR002130">
    <property type="entry name" value="Cyclophilin-type_PPIase_dom"/>
</dbReference>
<dbReference type="InterPro" id="IPR011990">
    <property type="entry name" value="TPR-like_helical_dom_sf"/>
</dbReference>
<dbReference type="InterPro" id="IPR019734">
    <property type="entry name" value="TPR_rpt"/>
</dbReference>
<dbReference type="PANTHER" id="PTHR11071">
    <property type="entry name" value="PEPTIDYL-PROLYL CIS-TRANS ISOMERASE"/>
    <property type="match status" value="1"/>
</dbReference>
<dbReference type="PANTHER" id="PTHR11071:SF561">
    <property type="entry name" value="PEPTIDYL-PROLYL CIS-TRANS ISOMERASE D-RELATED"/>
    <property type="match status" value="1"/>
</dbReference>
<dbReference type="Pfam" id="PF00160">
    <property type="entry name" value="Pro_isomerase"/>
    <property type="match status" value="1"/>
</dbReference>
<dbReference type="Pfam" id="PF00515">
    <property type="entry name" value="TPR_1"/>
    <property type="match status" value="1"/>
</dbReference>
<dbReference type="PRINTS" id="PR00153">
    <property type="entry name" value="CSAPPISMRASE"/>
</dbReference>
<dbReference type="SMART" id="SM00028">
    <property type="entry name" value="TPR"/>
    <property type="match status" value="2"/>
</dbReference>
<dbReference type="SUPFAM" id="SSF50891">
    <property type="entry name" value="Cyclophilin-like"/>
    <property type="match status" value="1"/>
</dbReference>
<dbReference type="SUPFAM" id="SSF48452">
    <property type="entry name" value="TPR-like"/>
    <property type="match status" value="1"/>
</dbReference>
<dbReference type="PROSITE" id="PS00170">
    <property type="entry name" value="CSA_PPIASE_1"/>
    <property type="match status" value="1"/>
</dbReference>
<dbReference type="PROSITE" id="PS50072">
    <property type="entry name" value="CSA_PPIASE_2"/>
    <property type="match status" value="1"/>
</dbReference>
<dbReference type="PROSITE" id="PS50005">
    <property type="entry name" value="TPR"/>
    <property type="match status" value="1"/>
</dbReference>
<dbReference type="PROSITE" id="PS50293">
    <property type="entry name" value="TPR_REGION"/>
    <property type="match status" value="1"/>
</dbReference>
<accession>Q4WIF3</accession>
<protein>
    <recommendedName>
        <fullName>Peptidyl-prolyl cis-trans isomerase D</fullName>
        <shortName>PPIase D</shortName>
        <ecNumber>5.2.1.8</ecNumber>
    </recommendedName>
    <alternativeName>
        <fullName>Rotamase D</fullName>
    </alternativeName>
</protein>
<comment type="function">
    <text evidence="1">PPIases accelerate the folding of proteins. It catalyzes the cis-trans isomerization of proline imidic peptide bonds in oligopeptides (By similarity).</text>
</comment>
<comment type="catalytic activity">
    <reaction>
        <text>[protein]-peptidylproline (omega=180) = [protein]-peptidylproline (omega=0)</text>
        <dbReference type="Rhea" id="RHEA:16237"/>
        <dbReference type="Rhea" id="RHEA-COMP:10747"/>
        <dbReference type="Rhea" id="RHEA-COMP:10748"/>
        <dbReference type="ChEBI" id="CHEBI:83833"/>
        <dbReference type="ChEBI" id="CHEBI:83834"/>
        <dbReference type="EC" id="5.2.1.8"/>
    </reaction>
</comment>
<comment type="subcellular location">
    <subcellularLocation>
        <location evidence="1">Cytoplasm</location>
    </subcellularLocation>
</comment>
<comment type="similarity">
    <text evidence="3">Belongs to the cyclophilin-type PPIase family. PPIase D subfamily.</text>
</comment>
<gene>
    <name type="primary">cpr6</name>
    <name type="ORF">AFUA_2G02050</name>
</gene>